<keyword id="KW-1185">Reference proteome</keyword>
<feature type="chain" id="PRO_0000327982" description="Proliferation-associated protein A">
    <location>
        <begin position="1"/>
        <end position="385"/>
    </location>
</feature>
<feature type="sequence conflict" description="In Ref. 2; AAB03665." evidence="1" ref="2">
    <original>I</original>
    <variation>T</variation>
    <location>
        <position position="380"/>
    </location>
</feature>
<protein>
    <recommendedName>
        <fullName>Proliferation-associated protein A</fullName>
    </recommendedName>
</protein>
<dbReference type="EMBL" id="AAFI02000047">
    <property type="protein sequence ID" value="EAS66866.1"/>
    <property type="molecule type" value="Genomic_DNA"/>
</dbReference>
<dbReference type="EMBL" id="U61403">
    <property type="protein sequence ID" value="AAB03665.1"/>
    <property type="molecule type" value="mRNA"/>
</dbReference>
<dbReference type="RefSeq" id="XP_001134549.1">
    <property type="nucleotide sequence ID" value="XM_001134549.1"/>
</dbReference>
<dbReference type="SMR" id="Q1ZXG4"/>
<dbReference type="FunCoup" id="Q1ZXG4">
    <property type="interactions" value="1209"/>
</dbReference>
<dbReference type="STRING" id="44689.Q1ZXG4"/>
<dbReference type="PaxDb" id="44689-DDB0232955"/>
<dbReference type="EnsemblProtists" id="EAS66866">
    <property type="protein sequence ID" value="EAS66866"/>
    <property type="gene ID" value="DDB_G0282361"/>
</dbReference>
<dbReference type="GeneID" id="8623602"/>
<dbReference type="KEGG" id="ddi:DDB_G0282361"/>
<dbReference type="dictyBase" id="DDB_G0282361">
    <property type="gene designation" value="prlA"/>
</dbReference>
<dbReference type="VEuPathDB" id="AmoebaDB:DDB_G0282361"/>
<dbReference type="eggNOG" id="KOG2776">
    <property type="taxonomic scope" value="Eukaryota"/>
</dbReference>
<dbReference type="HOGENOM" id="CLU_041451_2_1_1"/>
<dbReference type="InParanoid" id="Q1ZXG4"/>
<dbReference type="OMA" id="SRMFYSE"/>
<dbReference type="PhylomeDB" id="Q1ZXG4"/>
<dbReference type="Reactome" id="R-DDI-6798695">
    <property type="pathway name" value="Neutrophil degranulation"/>
</dbReference>
<dbReference type="PRO" id="PR:Q1ZXG4"/>
<dbReference type="Proteomes" id="UP000002195">
    <property type="component" value="Chromosome 3"/>
</dbReference>
<dbReference type="GO" id="GO:0045335">
    <property type="term" value="C:phagocytic vesicle"/>
    <property type="evidence" value="ECO:0007005"/>
    <property type="project" value="dictyBase"/>
</dbReference>
<dbReference type="CDD" id="cd01089">
    <property type="entry name" value="PA2G4-like"/>
    <property type="match status" value="1"/>
</dbReference>
<dbReference type="FunFam" id="1.10.10.10:FF:000029">
    <property type="entry name" value="Proliferation-associated 2G4, a"/>
    <property type="match status" value="1"/>
</dbReference>
<dbReference type="Gene3D" id="3.90.230.10">
    <property type="entry name" value="Creatinase/methionine aminopeptidase superfamily"/>
    <property type="match status" value="1"/>
</dbReference>
<dbReference type="Gene3D" id="1.10.10.10">
    <property type="entry name" value="Winged helix-like DNA-binding domain superfamily/Winged helix DNA-binding domain"/>
    <property type="match status" value="1"/>
</dbReference>
<dbReference type="InterPro" id="IPR036005">
    <property type="entry name" value="Creatinase/aminopeptidase-like"/>
</dbReference>
<dbReference type="InterPro" id="IPR004545">
    <property type="entry name" value="PA2G4"/>
</dbReference>
<dbReference type="InterPro" id="IPR047113">
    <property type="entry name" value="PA2G4/ARX1"/>
</dbReference>
<dbReference type="InterPro" id="IPR000994">
    <property type="entry name" value="Pept_M24"/>
</dbReference>
<dbReference type="InterPro" id="IPR001714">
    <property type="entry name" value="Pept_M24_MAP"/>
</dbReference>
<dbReference type="InterPro" id="IPR036388">
    <property type="entry name" value="WH-like_DNA-bd_sf"/>
</dbReference>
<dbReference type="InterPro" id="IPR036390">
    <property type="entry name" value="WH_DNA-bd_sf"/>
</dbReference>
<dbReference type="NCBIfam" id="TIGR00495">
    <property type="entry name" value="crvDNA_42K"/>
    <property type="match status" value="1"/>
</dbReference>
<dbReference type="PANTHER" id="PTHR10804:SF11">
    <property type="entry name" value="PROLIFERATION-ASSOCIATED PROTEIN 2G4"/>
    <property type="match status" value="1"/>
</dbReference>
<dbReference type="PANTHER" id="PTHR10804">
    <property type="entry name" value="PROTEASE FAMILY M24 METHIONYL AMINOPEPTIDASE, AMINOPEPTIDASE P"/>
    <property type="match status" value="1"/>
</dbReference>
<dbReference type="Pfam" id="PF00557">
    <property type="entry name" value="Peptidase_M24"/>
    <property type="match status" value="1"/>
</dbReference>
<dbReference type="PRINTS" id="PR00599">
    <property type="entry name" value="MAPEPTIDASE"/>
</dbReference>
<dbReference type="SUPFAM" id="SSF55920">
    <property type="entry name" value="Creatinase/aminopeptidase"/>
    <property type="match status" value="1"/>
</dbReference>
<dbReference type="SUPFAM" id="SSF46785">
    <property type="entry name" value="Winged helix' DNA-binding domain"/>
    <property type="match status" value="1"/>
</dbReference>
<proteinExistence type="evidence at transcript level"/>
<reference key="1">
    <citation type="journal article" date="2005" name="Nature">
        <title>The genome of the social amoeba Dictyostelium discoideum.</title>
        <authorList>
            <person name="Eichinger L."/>
            <person name="Pachebat J.A."/>
            <person name="Gloeckner G."/>
            <person name="Rajandream M.A."/>
            <person name="Sucgang R."/>
            <person name="Berriman M."/>
            <person name="Song J."/>
            <person name="Olsen R."/>
            <person name="Szafranski K."/>
            <person name="Xu Q."/>
            <person name="Tunggal B."/>
            <person name="Kummerfeld S."/>
            <person name="Madera M."/>
            <person name="Konfortov B.A."/>
            <person name="Rivero F."/>
            <person name="Bankier A.T."/>
            <person name="Lehmann R."/>
            <person name="Hamlin N."/>
            <person name="Davies R."/>
            <person name="Gaudet P."/>
            <person name="Fey P."/>
            <person name="Pilcher K."/>
            <person name="Chen G."/>
            <person name="Saunders D."/>
            <person name="Sodergren E.J."/>
            <person name="Davis P."/>
            <person name="Kerhornou A."/>
            <person name="Nie X."/>
            <person name="Hall N."/>
            <person name="Anjard C."/>
            <person name="Hemphill L."/>
            <person name="Bason N."/>
            <person name="Farbrother P."/>
            <person name="Desany B."/>
            <person name="Just E."/>
            <person name="Morio T."/>
            <person name="Rost R."/>
            <person name="Churcher C.M."/>
            <person name="Cooper J."/>
            <person name="Haydock S."/>
            <person name="van Driessche N."/>
            <person name="Cronin A."/>
            <person name="Goodhead I."/>
            <person name="Muzny D.M."/>
            <person name="Mourier T."/>
            <person name="Pain A."/>
            <person name="Lu M."/>
            <person name="Harper D."/>
            <person name="Lindsay R."/>
            <person name="Hauser H."/>
            <person name="James K.D."/>
            <person name="Quiles M."/>
            <person name="Madan Babu M."/>
            <person name="Saito T."/>
            <person name="Buchrieser C."/>
            <person name="Wardroper A."/>
            <person name="Felder M."/>
            <person name="Thangavelu M."/>
            <person name="Johnson D."/>
            <person name="Knights A."/>
            <person name="Loulseged H."/>
            <person name="Mungall K.L."/>
            <person name="Oliver K."/>
            <person name="Price C."/>
            <person name="Quail M.A."/>
            <person name="Urushihara H."/>
            <person name="Hernandez J."/>
            <person name="Rabbinowitsch E."/>
            <person name="Steffen D."/>
            <person name="Sanders M."/>
            <person name="Ma J."/>
            <person name="Kohara Y."/>
            <person name="Sharp S."/>
            <person name="Simmonds M.N."/>
            <person name="Spiegler S."/>
            <person name="Tivey A."/>
            <person name="Sugano S."/>
            <person name="White B."/>
            <person name="Walker D."/>
            <person name="Woodward J.R."/>
            <person name="Winckler T."/>
            <person name="Tanaka Y."/>
            <person name="Shaulsky G."/>
            <person name="Schleicher M."/>
            <person name="Weinstock G.M."/>
            <person name="Rosenthal A."/>
            <person name="Cox E.C."/>
            <person name="Chisholm R.L."/>
            <person name="Gibbs R.A."/>
            <person name="Loomis W.F."/>
            <person name="Platzer M."/>
            <person name="Kay R.R."/>
            <person name="Williams J.G."/>
            <person name="Dear P.H."/>
            <person name="Noegel A.A."/>
            <person name="Barrell B.G."/>
            <person name="Kuspa A."/>
        </authorList>
    </citation>
    <scope>NUCLEOTIDE SEQUENCE [LARGE SCALE GENOMIC DNA]</scope>
    <source>
        <strain>AX4</strain>
    </source>
</reference>
<reference key="2">
    <citation type="journal article" date="1996" name="Proc. Natl. Acad. Sci. U.S.A.">
        <title>Ordered yeast artificial chromosome clones representing the Dictyostelium discoideum genome.</title>
        <authorList>
            <person name="Kuspa A."/>
            <person name="Loomis W.F."/>
        </authorList>
    </citation>
    <scope>NUCLEOTIDE SEQUENCE [LARGE SCALE MRNA] OF 7-385</scope>
    <source>
        <strain>AX4</strain>
    </source>
</reference>
<gene>
    <name type="primary">prlA</name>
    <name type="ORF">DDB_G0282361</name>
</gene>
<organism>
    <name type="scientific">Dictyostelium discoideum</name>
    <name type="common">Social amoeba</name>
    <dbReference type="NCBI Taxonomy" id="44689"/>
    <lineage>
        <taxon>Eukaryota</taxon>
        <taxon>Amoebozoa</taxon>
        <taxon>Evosea</taxon>
        <taxon>Eumycetozoa</taxon>
        <taxon>Dictyostelia</taxon>
        <taxon>Dictyosteliales</taxon>
        <taxon>Dictyosteliaceae</taxon>
        <taxon>Dictyostelium</taxon>
    </lineage>
</organism>
<accession>Q1ZXG4</accession>
<accession>Q23918</accession>
<evidence type="ECO:0000305" key="1"/>
<name>PRLA_DICDI</name>
<comment type="similarity">
    <text evidence="1">Belongs to the peptidase M24 family.</text>
</comment>
<sequence length="385" mass="42306">MSNKDQEIKEEAPVAIEDLSNPVVVDSYNAAGIIANNAIKHVISKCVVGALVVDICQYGDDFIEAEAAKTFTKRKNLEKGIAFPTCVSVNNCVGHFSPLKGNTRTLKQGDVVKIDLGCHIDGYIAVGAHTIIIGNTSAESMTGKVADAICAAHYALEAALRMIRPGKTSNEVTQVIEKISDMYGVTSVSGILSHELKRFIIDGEKVIFSKNEPSQKIQTYEFQENEVYCIDIVMSTGEGKAREEADRPTIYRRNLDSTYKLKSKASRDFKDQIVKRYSALPFPLRNFDEKVSKLGLVELVEHQVLAAYPVLFDRSGCEVVQFKTTVLVLPNGNHKLIGTEFPLPFVRSEFSVTDDAIKALIASPLKINKKAAKKASATTIDVKMQ</sequence>